<feature type="chain" id="PRO_0000050605" description="Probable 5-hydroxyisourate hydrolase">
    <location>
        <begin position="1"/>
        <end position="124"/>
    </location>
</feature>
<feature type="binding site" evidence="1">
    <location>
        <position position="16"/>
    </location>
    <ligand>
        <name>substrate</name>
    </ligand>
</feature>
<feature type="binding site" evidence="1">
    <location>
        <position position="57"/>
    </location>
    <ligand>
        <name>substrate</name>
    </ligand>
</feature>
<feature type="binding site" evidence="1">
    <location>
        <position position="121"/>
    </location>
    <ligand>
        <name>substrate</name>
    </ligand>
</feature>
<evidence type="ECO:0000250" key="1"/>
<evidence type="ECO:0000305" key="2"/>
<reference key="1">
    <citation type="journal article" date="2002" name="Nature">
        <title>The genome sequence of Schizosaccharomyces pombe.</title>
        <authorList>
            <person name="Wood V."/>
            <person name="Gwilliam R."/>
            <person name="Rajandream M.A."/>
            <person name="Lyne M.H."/>
            <person name="Lyne R."/>
            <person name="Stewart A."/>
            <person name="Sgouros J.G."/>
            <person name="Peat N."/>
            <person name="Hayles J."/>
            <person name="Baker S.G."/>
            <person name="Basham D."/>
            <person name="Bowman S."/>
            <person name="Brooks K."/>
            <person name="Brown D."/>
            <person name="Brown S."/>
            <person name="Chillingworth T."/>
            <person name="Churcher C.M."/>
            <person name="Collins M."/>
            <person name="Connor R."/>
            <person name="Cronin A."/>
            <person name="Davis P."/>
            <person name="Feltwell T."/>
            <person name="Fraser A."/>
            <person name="Gentles S."/>
            <person name="Goble A."/>
            <person name="Hamlin N."/>
            <person name="Harris D.E."/>
            <person name="Hidalgo J."/>
            <person name="Hodgson G."/>
            <person name="Holroyd S."/>
            <person name="Hornsby T."/>
            <person name="Howarth S."/>
            <person name="Huckle E.J."/>
            <person name="Hunt S."/>
            <person name="Jagels K."/>
            <person name="James K.D."/>
            <person name="Jones L."/>
            <person name="Jones M."/>
            <person name="Leather S."/>
            <person name="McDonald S."/>
            <person name="McLean J."/>
            <person name="Mooney P."/>
            <person name="Moule S."/>
            <person name="Mungall K.L."/>
            <person name="Murphy L.D."/>
            <person name="Niblett D."/>
            <person name="Odell C."/>
            <person name="Oliver K."/>
            <person name="O'Neil S."/>
            <person name="Pearson D."/>
            <person name="Quail M.A."/>
            <person name="Rabbinowitsch E."/>
            <person name="Rutherford K.M."/>
            <person name="Rutter S."/>
            <person name="Saunders D."/>
            <person name="Seeger K."/>
            <person name="Sharp S."/>
            <person name="Skelton J."/>
            <person name="Simmonds M.N."/>
            <person name="Squares R."/>
            <person name="Squares S."/>
            <person name="Stevens K."/>
            <person name="Taylor K."/>
            <person name="Taylor R.G."/>
            <person name="Tivey A."/>
            <person name="Walsh S.V."/>
            <person name="Warren T."/>
            <person name="Whitehead S."/>
            <person name="Woodward J.R."/>
            <person name="Volckaert G."/>
            <person name="Aert R."/>
            <person name="Robben J."/>
            <person name="Grymonprez B."/>
            <person name="Weltjens I."/>
            <person name="Vanstreels E."/>
            <person name="Rieger M."/>
            <person name="Schaefer M."/>
            <person name="Mueller-Auer S."/>
            <person name="Gabel C."/>
            <person name="Fuchs M."/>
            <person name="Duesterhoeft A."/>
            <person name="Fritzc C."/>
            <person name="Holzer E."/>
            <person name="Moestl D."/>
            <person name="Hilbert H."/>
            <person name="Borzym K."/>
            <person name="Langer I."/>
            <person name="Beck A."/>
            <person name="Lehrach H."/>
            <person name="Reinhardt R."/>
            <person name="Pohl T.M."/>
            <person name="Eger P."/>
            <person name="Zimmermann W."/>
            <person name="Wedler H."/>
            <person name="Wambutt R."/>
            <person name="Purnelle B."/>
            <person name="Goffeau A."/>
            <person name="Cadieu E."/>
            <person name="Dreano S."/>
            <person name="Gloux S."/>
            <person name="Lelaure V."/>
            <person name="Mottier S."/>
            <person name="Galibert F."/>
            <person name="Aves S.J."/>
            <person name="Xiang Z."/>
            <person name="Hunt C."/>
            <person name="Moore K."/>
            <person name="Hurst S.M."/>
            <person name="Lucas M."/>
            <person name="Rochet M."/>
            <person name="Gaillardin C."/>
            <person name="Tallada V.A."/>
            <person name="Garzon A."/>
            <person name="Thode G."/>
            <person name="Daga R.R."/>
            <person name="Cruzado L."/>
            <person name="Jimenez J."/>
            <person name="Sanchez M."/>
            <person name="del Rey F."/>
            <person name="Benito J."/>
            <person name="Dominguez A."/>
            <person name="Revuelta J.L."/>
            <person name="Moreno S."/>
            <person name="Armstrong J."/>
            <person name="Forsburg S.L."/>
            <person name="Cerutti L."/>
            <person name="Lowe T."/>
            <person name="McCombie W.R."/>
            <person name="Paulsen I."/>
            <person name="Potashkin J."/>
            <person name="Shpakovski G.V."/>
            <person name="Ussery D."/>
            <person name="Barrell B.G."/>
            <person name="Nurse P."/>
        </authorList>
    </citation>
    <scope>NUCLEOTIDE SEQUENCE [LARGE SCALE GENOMIC DNA]</scope>
    <source>
        <strain>972 / ATCC 24843</strain>
    </source>
</reference>
<keyword id="KW-0378">Hydrolase</keyword>
<keyword id="KW-0659">Purine metabolism</keyword>
<keyword id="KW-1185">Reference proteome</keyword>
<gene>
    <name type="ORF">SPCC285.04</name>
</gene>
<accession>O74492</accession>
<comment type="function">
    <text evidence="1">Catalyzes the hydrolysis of 5-hydroxyisourate (HIU) to 2-oxo-4-hydroxy-4-carboxy-5-ureidoimidazoline (OHCU).</text>
</comment>
<comment type="catalytic activity">
    <reaction>
        <text>5-hydroxyisourate + H2O = 5-hydroxy-2-oxo-4-ureido-2,5-dihydro-1H-imidazole-5-carboxylate + H(+)</text>
        <dbReference type="Rhea" id="RHEA:23736"/>
        <dbReference type="ChEBI" id="CHEBI:15377"/>
        <dbReference type="ChEBI" id="CHEBI:15378"/>
        <dbReference type="ChEBI" id="CHEBI:18072"/>
        <dbReference type="ChEBI" id="CHEBI:58639"/>
        <dbReference type="EC" id="3.5.2.17"/>
    </reaction>
</comment>
<comment type="subunit">
    <text evidence="1">Homotetramer.</text>
</comment>
<comment type="miscellaneous">
    <text>HIU hydrolysis also occurs spontaneously, but more slowly.</text>
</comment>
<comment type="similarity">
    <text evidence="2">Belongs to the transthyretin family. 5-hydroxyisourate hydrolase subfamily.</text>
</comment>
<sequence length="124" mass="13521">MASNPPQPQGPALTAHILNTMSGIPAAGVQVALFKLNESPTPSQQFIATTETNANGRVTSWNVDLSTVESGIYTFRFETGAYFDSLGVTSFYPYVEMAVRINKGQHYHIPLLLAPYGYTTYRGS</sequence>
<organism>
    <name type="scientific">Schizosaccharomyces pombe (strain 972 / ATCC 24843)</name>
    <name type="common">Fission yeast</name>
    <dbReference type="NCBI Taxonomy" id="284812"/>
    <lineage>
        <taxon>Eukaryota</taxon>
        <taxon>Fungi</taxon>
        <taxon>Dikarya</taxon>
        <taxon>Ascomycota</taxon>
        <taxon>Taphrinomycotina</taxon>
        <taxon>Schizosaccharomycetes</taxon>
        <taxon>Schizosaccharomycetales</taxon>
        <taxon>Schizosaccharomycetaceae</taxon>
        <taxon>Schizosaccharomyces</taxon>
    </lineage>
</organism>
<protein>
    <recommendedName>
        <fullName>Probable 5-hydroxyisourate hydrolase</fullName>
        <shortName>HIU hydrolase</shortName>
        <shortName>HIUHase</shortName>
        <ecNumber>3.5.2.17</ecNumber>
    </recommendedName>
    <alternativeName>
        <fullName>Transthyretin-like protein C285.04</fullName>
    </alternativeName>
</protein>
<name>HIUH_SCHPO</name>
<dbReference type="EC" id="3.5.2.17"/>
<dbReference type="EMBL" id="CU329672">
    <property type="protein sequence ID" value="CAA20843.1"/>
    <property type="molecule type" value="Genomic_DNA"/>
</dbReference>
<dbReference type="PIR" id="T41250">
    <property type="entry name" value="T41250"/>
</dbReference>
<dbReference type="RefSeq" id="NP_588333.1">
    <property type="nucleotide sequence ID" value="NM_001023324.2"/>
</dbReference>
<dbReference type="SMR" id="O74492"/>
<dbReference type="BioGRID" id="275826">
    <property type="interactions" value="6"/>
</dbReference>
<dbReference type="FunCoup" id="O74492">
    <property type="interactions" value="45"/>
</dbReference>
<dbReference type="STRING" id="284812.O74492"/>
<dbReference type="PaxDb" id="4896-SPCC285.04.1"/>
<dbReference type="EnsemblFungi" id="SPCC285.04.1">
    <property type="protein sequence ID" value="SPCC285.04.1:pep"/>
    <property type="gene ID" value="SPCC285.04"/>
</dbReference>
<dbReference type="KEGG" id="spo:2539256"/>
<dbReference type="PomBase" id="SPCC285.04"/>
<dbReference type="VEuPathDB" id="FungiDB:SPCC285.04"/>
<dbReference type="eggNOG" id="KOG3006">
    <property type="taxonomic scope" value="Eukaryota"/>
</dbReference>
<dbReference type="HOGENOM" id="CLU_115536_1_0_1"/>
<dbReference type="InParanoid" id="O74492"/>
<dbReference type="OMA" id="DADSHYH"/>
<dbReference type="PhylomeDB" id="O74492"/>
<dbReference type="Reactome" id="R-SPO-6798695">
    <property type="pathway name" value="Neutrophil degranulation"/>
</dbReference>
<dbReference type="PRO" id="PR:O74492"/>
<dbReference type="Proteomes" id="UP000002485">
    <property type="component" value="Chromosome III"/>
</dbReference>
<dbReference type="GO" id="GO:0005829">
    <property type="term" value="C:cytosol"/>
    <property type="evidence" value="ECO:0007005"/>
    <property type="project" value="PomBase"/>
</dbReference>
<dbReference type="GO" id="GO:0005634">
    <property type="term" value="C:nucleus"/>
    <property type="evidence" value="ECO:0007005"/>
    <property type="project" value="PomBase"/>
</dbReference>
<dbReference type="GO" id="GO:0033971">
    <property type="term" value="F:hydroxyisourate hydrolase activity"/>
    <property type="evidence" value="ECO:0000255"/>
    <property type="project" value="PomBase"/>
</dbReference>
<dbReference type="GO" id="GO:0006144">
    <property type="term" value="P:purine nucleobase metabolic process"/>
    <property type="evidence" value="ECO:0000318"/>
    <property type="project" value="GO_Central"/>
</dbReference>
<dbReference type="CDD" id="cd05822">
    <property type="entry name" value="TLP_HIUase"/>
    <property type="match status" value="1"/>
</dbReference>
<dbReference type="Gene3D" id="2.60.40.180">
    <property type="entry name" value="Transthyretin/hydroxyisourate hydrolase domain"/>
    <property type="match status" value="1"/>
</dbReference>
<dbReference type="InterPro" id="IPR014306">
    <property type="entry name" value="Hydroxyisourate_hydrolase"/>
</dbReference>
<dbReference type="InterPro" id="IPR023418">
    <property type="entry name" value="Thyroxine_BS"/>
</dbReference>
<dbReference type="InterPro" id="IPR000895">
    <property type="entry name" value="Transthyretin/HIU_hydrolase"/>
</dbReference>
<dbReference type="InterPro" id="IPR023416">
    <property type="entry name" value="Transthyretin/HIU_hydrolase_d"/>
</dbReference>
<dbReference type="InterPro" id="IPR036817">
    <property type="entry name" value="Transthyretin/HIU_hydrolase_sf"/>
</dbReference>
<dbReference type="InterPro" id="IPR023419">
    <property type="entry name" value="Transthyretin_CS"/>
</dbReference>
<dbReference type="NCBIfam" id="TIGR02962">
    <property type="entry name" value="hdxy_isourate"/>
    <property type="match status" value="1"/>
</dbReference>
<dbReference type="PANTHER" id="PTHR10395:SF7">
    <property type="entry name" value="5-HYDROXYISOURATE HYDROLASE"/>
    <property type="match status" value="1"/>
</dbReference>
<dbReference type="PANTHER" id="PTHR10395">
    <property type="entry name" value="URICASE AND TRANSTHYRETIN-RELATED"/>
    <property type="match status" value="1"/>
</dbReference>
<dbReference type="Pfam" id="PF00576">
    <property type="entry name" value="Transthyretin"/>
    <property type="match status" value="1"/>
</dbReference>
<dbReference type="PRINTS" id="PR00189">
    <property type="entry name" value="TRNSTHYRETIN"/>
</dbReference>
<dbReference type="SMART" id="SM00095">
    <property type="entry name" value="TR_THY"/>
    <property type="match status" value="1"/>
</dbReference>
<dbReference type="SUPFAM" id="SSF49472">
    <property type="entry name" value="Transthyretin (synonym: prealbumin)"/>
    <property type="match status" value="1"/>
</dbReference>
<dbReference type="PROSITE" id="PS00768">
    <property type="entry name" value="TRANSTHYRETIN_1"/>
    <property type="match status" value="1"/>
</dbReference>
<dbReference type="PROSITE" id="PS00769">
    <property type="entry name" value="TRANSTHYRETIN_2"/>
    <property type="match status" value="1"/>
</dbReference>
<proteinExistence type="inferred from homology"/>